<name>TRPB_ACIF5</name>
<keyword id="KW-0028">Amino-acid biosynthesis</keyword>
<keyword id="KW-0057">Aromatic amino acid biosynthesis</keyword>
<keyword id="KW-0456">Lyase</keyword>
<keyword id="KW-0663">Pyridoxal phosphate</keyword>
<keyword id="KW-0822">Tryptophan biosynthesis</keyword>
<gene>
    <name evidence="1" type="primary">trpB</name>
    <name type="ordered locus">Lferr_1727</name>
</gene>
<feature type="chain" id="PRO_1000095770" description="Tryptophan synthase beta chain">
    <location>
        <begin position="1"/>
        <end position="399"/>
    </location>
</feature>
<feature type="modified residue" description="N6-(pyridoxal phosphate)lysine" evidence="1">
    <location>
        <position position="92"/>
    </location>
</feature>
<sequence length="399" mass="43287">MGTYALPDAFGHYGPYGGRFVAETLIPALEELERAYQEAQRDPEFRAELHSELRQFVGRPNPLYHAGRLSRELGGAQIYLKREDLNHTGAHKINNAVGQALLARRMGKKRVIAETGAGQHGVATATVATRYGMECLVYMGEEDIQRQSSNVFRMRLLGAQVTAVSSGTRTLKDALNEALRDWVTNVESTFYVIGTVAGPHPYPVMVRDFHRVIGDEARAQCLELTGRLPDCLIACVGGGSNAIGLFYPFIEDRAVRMIGVEAGGLGLGTGQHAAPLTTGRPGVLHGNRTYLMEDEDGQILPTHSISAGLDYPGVGPEHAYLKDTGRAEYVAATDEEALAAFHRLCRTEGIIPALESAHALAHAFRLAPTMRSDQTIIVNLSGRGDKDIHTVAALEGIHL</sequence>
<organism>
    <name type="scientific">Acidithiobacillus ferrooxidans (strain ATCC 53993 / BNL-5-31)</name>
    <name type="common">Leptospirillum ferrooxidans (ATCC 53993)</name>
    <dbReference type="NCBI Taxonomy" id="380394"/>
    <lineage>
        <taxon>Bacteria</taxon>
        <taxon>Pseudomonadati</taxon>
        <taxon>Pseudomonadota</taxon>
        <taxon>Acidithiobacillia</taxon>
        <taxon>Acidithiobacillales</taxon>
        <taxon>Acidithiobacillaceae</taxon>
        <taxon>Acidithiobacillus</taxon>
    </lineage>
</organism>
<evidence type="ECO:0000255" key="1">
    <source>
        <dbReference type="HAMAP-Rule" id="MF_00133"/>
    </source>
</evidence>
<accession>B5EK18</accession>
<protein>
    <recommendedName>
        <fullName evidence="1">Tryptophan synthase beta chain</fullName>
        <ecNumber evidence="1">4.2.1.20</ecNumber>
    </recommendedName>
</protein>
<dbReference type="EC" id="4.2.1.20" evidence="1"/>
<dbReference type="EMBL" id="CP001132">
    <property type="protein sequence ID" value="ACH83949.1"/>
    <property type="molecule type" value="Genomic_DNA"/>
</dbReference>
<dbReference type="RefSeq" id="WP_012536947.1">
    <property type="nucleotide sequence ID" value="NC_011206.1"/>
</dbReference>
<dbReference type="SMR" id="B5EK18"/>
<dbReference type="GeneID" id="65281205"/>
<dbReference type="KEGG" id="afe:Lferr_1727"/>
<dbReference type="eggNOG" id="COG0133">
    <property type="taxonomic scope" value="Bacteria"/>
</dbReference>
<dbReference type="HOGENOM" id="CLU_016734_3_1_6"/>
<dbReference type="UniPathway" id="UPA00035">
    <property type="reaction ID" value="UER00044"/>
</dbReference>
<dbReference type="GO" id="GO:0005737">
    <property type="term" value="C:cytoplasm"/>
    <property type="evidence" value="ECO:0007669"/>
    <property type="project" value="TreeGrafter"/>
</dbReference>
<dbReference type="GO" id="GO:0004834">
    <property type="term" value="F:tryptophan synthase activity"/>
    <property type="evidence" value="ECO:0007669"/>
    <property type="project" value="UniProtKB-UniRule"/>
</dbReference>
<dbReference type="CDD" id="cd06446">
    <property type="entry name" value="Trp-synth_B"/>
    <property type="match status" value="1"/>
</dbReference>
<dbReference type="FunFam" id="3.40.50.1100:FF:000001">
    <property type="entry name" value="Tryptophan synthase beta chain"/>
    <property type="match status" value="1"/>
</dbReference>
<dbReference type="FunFam" id="3.40.50.1100:FF:000004">
    <property type="entry name" value="Tryptophan synthase beta chain"/>
    <property type="match status" value="1"/>
</dbReference>
<dbReference type="Gene3D" id="3.40.50.1100">
    <property type="match status" value="2"/>
</dbReference>
<dbReference type="HAMAP" id="MF_00133">
    <property type="entry name" value="Trp_synth_beta"/>
    <property type="match status" value="1"/>
</dbReference>
<dbReference type="InterPro" id="IPR006653">
    <property type="entry name" value="Trp_synth_b_CS"/>
</dbReference>
<dbReference type="InterPro" id="IPR006654">
    <property type="entry name" value="Trp_synth_beta"/>
</dbReference>
<dbReference type="InterPro" id="IPR023026">
    <property type="entry name" value="Trp_synth_beta/beta-like"/>
</dbReference>
<dbReference type="InterPro" id="IPR001926">
    <property type="entry name" value="TrpB-like_PALP"/>
</dbReference>
<dbReference type="InterPro" id="IPR036052">
    <property type="entry name" value="TrpB-like_PALP_sf"/>
</dbReference>
<dbReference type="NCBIfam" id="TIGR00263">
    <property type="entry name" value="trpB"/>
    <property type="match status" value="1"/>
</dbReference>
<dbReference type="PANTHER" id="PTHR48077:SF3">
    <property type="entry name" value="TRYPTOPHAN SYNTHASE"/>
    <property type="match status" value="1"/>
</dbReference>
<dbReference type="PANTHER" id="PTHR48077">
    <property type="entry name" value="TRYPTOPHAN SYNTHASE-RELATED"/>
    <property type="match status" value="1"/>
</dbReference>
<dbReference type="Pfam" id="PF00291">
    <property type="entry name" value="PALP"/>
    <property type="match status" value="1"/>
</dbReference>
<dbReference type="PIRSF" id="PIRSF001413">
    <property type="entry name" value="Trp_syn_beta"/>
    <property type="match status" value="1"/>
</dbReference>
<dbReference type="SUPFAM" id="SSF53686">
    <property type="entry name" value="Tryptophan synthase beta subunit-like PLP-dependent enzymes"/>
    <property type="match status" value="1"/>
</dbReference>
<dbReference type="PROSITE" id="PS00168">
    <property type="entry name" value="TRP_SYNTHASE_BETA"/>
    <property type="match status" value="1"/>
</dbReference>
<comment type="function">
    <text evidence="1">The beta subunit is responsible for the synthesis of L-tryptophan from indole and L-serine.</text>
</comment>
<comment type="catalytic activity">
    <reaction evidence="1">
        <text>(1S,2R)-1-C-(indol-3-yl)glycerol 3-phosphate + L-serine = D-glyceraldehyde 3-phosphate + L-tryptophan + H2O</text>
        <dbReference type="Rhea" id="RHEA:10532"/>
        <dbReference type="ChEBI" id="CHEBI:15377"/>
        <dbReference type="ChEBI" id="CHEBI:33384"/>
        <dbReference type="ChEBI" id="CHEBI:57912"/>
        <dbReference type="ChEBI" id="CHEBI:58866"/>
        <dbReference type="ChEBI" id="CHEBI:59776"/>
        <dbReference type="EC" id="4.2.1.20"/>
    </reaction>
</comment>
<comment type="cofactor">
    <cofactor evidence="1">
        <name>pyridoxal 5'-phosphate</name>
        <dbReference type="ChEBI" id="CHEBI:597326"/>
    </cofactor>
</comment>
<comment type="pathway">
    <text evidence="1">Amino-acid biosynthesis; L-tryptophan biosynthesis; L-tryptophan from chorismate: step 5/5.</text>
</comment>
<comment type="subunit">
    <text evidence="1">Tetramer of two alpha and two beta chains.</text>
</comment>
<comment type="similarity">
    <text evidence="1">Belongs to the TrpB family.</text>
</comment>
<reference key="1">
    <citation type="submission" date="2008-08" db="EMBL/GenBank/DDBJ databases">
        <title>Complete sequence of Acidithiobacillus ferrooxidans ATCC 53993.</title>
        <authorList>
            <person name="Lucas S."/>
            <person name="Copeland A."/>
            <person name="Lapidus A."/>
            <person name="Glavina del Rio T."/>
            <person name="Dalin E."/>
            <person name="Tice H."/>
            <person name="Bruce D."/>
            <person name="Goodwin L."/>
            <person name="Pitluck S."/>
            <person name="Sims D."/>
            <person name="Brettin T."/>
            <person name="Detter J.C."/>
            <person name="Han C."/>
            <person name="Kuske C.R."/>
            <person name="Larimer F."/>
            <person name="Land M."/>
            <person name="Hauser L."/>
            <person name="Kyrpides N."/>
            <person name="Lykidis A."/>
            <person name="Borole A.P."/>
        </authorList>
    </citation>
    <scope>NUCLEOTIDE SEQUENCE [LARGE SCALE GENOMIC DNA]</scope>
    <source>
        <strain>ATCC 53993 / BNL-5-31</strain>
    </source>
</reference>
<proteinExistence type="inferred from homology"/>